<protein>
    <recommendedName>
        <fullName>Kunitz-type serine protease inhibitor homolog calcicludine</fullName>
        <shortName>CAC</shortName>
    </recommendedName>
    <alternativeName>
        <fullName>L-type calcium channel blocker</fullName>
    </alternativeName>
</protein>
<dbReference type="PIR" id="A36989">
    <property type="entry name" value="A36989"/>
</dbReference>
<dbReference type="PDB" id="1BF0">
    <property type="method" value="NMR"/>
    <property type="chains" value="A=1-60"/>
</dbReference>
<dbReference type="PDB" id="5YV7">
    <property type="method" value="X-ray"/>
    <property type="resolution" value="2.40 A"/>
    <property type="chains" value="A=1-60"/>
</dbReference>
<dbReference type="PDB" id="6KZF">
    <property type="method" value="X-ray"/>
    <property type="resolution" value="2.52 A"/>
    <property type="chains" value="A=1-60"/>
</dbReference>
<dbReference type="PDBsum" id="1BF0"/>
<dbReference type="PDBsum" id="5YV7"/>
<dbReference type="PDBsum" id="6KZF"/>
<dbReference type="SMR" id="P81658"/>
<dbReference type="MEROPS" id="I02.056"/>
<dbReference type="EvolutionaryTrace" id="P81658"/>
<dbReference type="GO" id="GO:0005615">
    <property type="term" value="C:extracellular space"/>
    <property type="evidence" value="ECO:0007669"/>
    <property type="project" value="TreeGrafter"/>
</dbReference>
<dbReference type="GO" id="GO:0005246">
    <property type="term" value="F:calcium channel regulator activity"/>
    <property type="evidence" value="ECO:0007669"/>
    <property type="project" value="UniProtKB-KW"/>
</dbReference>
<dbReference type="GO" id="GO:0004867">
    <property type="term" value="F:serine-type endopeptidase inhibitor activity"/>
    <property type="evidence" value="ECO:0007669"/>
    <property type="project" value="InterPro"/>
</dbReference>
<dbReference type="GO" id="GO:0090729">
    <property type="term" value="F:toxin activity"/>
    <property type="evidence" value="ECO:0007669"/>
    <property type="project" value="UniProtKB-KW"/>
</dbReference>
<dbReference type="CDD" id="cd22595">
    <property type="entry name" value="Kunitz_dendrotoxin"/>
    <property type="match status" value="1"/>
</dbReference>
<dbReference type="Gene3D" id="4.10.410.10">
    <property type="entry name" value="Pancreatic trypsin inhibitor Kunitz domain"/>
    <property type="match status" value="1"/>
</dbReference>
<dbReference type="InterPro" id="IPR002223">
    <property type="entry name" value="Kunitz_BPTI"/>
</dbReference>
<dbReference type="InterPro" id="IPR036880">
    <property type="entry name" value="Kunitz_BPTI_sf"/>
</dbReference>
<dbReference type="InterPro" id="IPR020901">
    <property type="entry name" value="Prtase_inh_Kunz-CS"/>
</dbReference>
<dbReference type="InterPro" id="IPR050098">
    <property type="entry name" value="TFPI/VKTCI-like"/>
</dbReference>
<dbReference type="PANTHER" id="PTHR10083:SF374">
    <property type="entry name" value="BPTI_KUNITZ INHIBITOR DOMAIN-CONTAINING PROTEIN"/>
    <property type="match status" value="1"/>
</dbReference>
<dbReference type="PANTHER" id="PTHR10083">
    <property type="entry name" value="KUNITZ-TYPE PROTEASE INHIBITOR-RELATED"/>
    <property type="match status" value="1"/>
</dbReference>
<dbReference type="Pfam" id="PF00014">
    <property type="entry name" value="Kunitz_BPTI"/>
    <property type="match status" value="1"/>
</dbReference>
<dbReference type="PRINTS" id="PR00759">
    <property type="entry name" value="BASICPTASE"/>
</dbReference>
<dbReference type="SMART" id="SM00131">
    <property type="entry name" value="KU"/>
    <property type="match status" value="1"/>
</dbReference>
<dbReference type="SUPFAM" id="SSF57362">
    <property type="entry name" value="BPTI-like"/>
    <property type="match status" value="1"/>
</dbReference>
<dbReference type="PROSITE" id="PS00280">
    <property type="entry name" value="BPTI_KUNITZ_1"/>
    <property type="match status" value="1"/>
</dbReference>
<dbReference type="PROSITE" id="PS50279">
    <property type="entry name" value="BPTI_KUNITZ_2"/>
    <property type="match status" value="1"/>
</dbReference>
<organism>
    <name type="scientific">Dendroaspis angusticeps</name>
    <name type="common">Eastern green mamba</name>
    <name type="synonym">Naja angusticeps</name>
    <dbReference type="NCBI Taxonomy" id="8618"/>
    <lineage>
        <taxon>Eukaryota</taxon>
        <taxon>Metazoa</taxon>
        <taxon>Chordata</taxon>
        <taxon>Craniata</taxon>
        <taxon>Vertebrata</taxon>
        <taxon>Euteleostomi</taxon>
        <taxon>Lepidosauria</taxon>
        <taxon>Squamata</taxon>
        <taxon>Bifurcata</taxon>
        <taxon>Unidentata</taxon>
        <taxon>Episquamata</taxon>
        <taxon>Toxicofera</taxon>
        <taxon>Serpentes</taxon>
        <taxon>Colubroidea</taxon>
        <taxon>Elapidae</taxon>
        <taxon>Elapinae</taxon>
        <taxon>Dendroaspis</taxon>
    </lineage>
</organism>
<proteinExistence type="evidence at protein level"/>
<reference key="1">
    <citation type="journal article" date="1994" name="Proc. Natl. Acad. Sci. U.S.A.">
        <title>Calcicludine, a venom peptide of the Kunitz-type protease inhibitor family, is a potent blocker of high-threshold Ca2+ channels with a high affinity for L-type channels in cerebellar granule neurons.</title>
        <authorList>
            <person name="Schweitz H."/>
            <person name="Heurteaux C."/>
            <person name="Bois P."/>
            <person name="Moinier D."/>
            <person name="Romey G."/>
            <person name="Lazdunski M."/>
        </authorList>
    </citation>
    <scope>PROTEIN SEQUENCE</scope>
    <source>
        <tissue>Venom</tissue>
    </source>
</reference>
<reference key="2">
    <citation type="journal article" date="1999" name="Proteins">
        <title>Conformational and functional variability supported by the BPTI fold: solution structure of the Ca2+ channel blocker calcicludine.</title>
        <authorList>
            <person name="Gilquin B."/>
            <person name="Lecoq A."/>
            <person name="Desne F."/>
            <person name="Guenneugues M."/>
            <person name="Zinn-Justin S."/>
            <person name="Menez A."/>
        </authorList>
    </citation>
    <scope>STRUCTURE BY NMR</scope>
</reference>
<comment type="function">
    <text>Potent blocker of high-voltage-activated calcium ion channels in the nanomolar range, particularly the L-type channels in cerebellar granule cells. The sensitivity of L-, N- and P-type channels to CAC is tissue and species-dependent. Blocks the L-type current of cardiac cells, depressing cardiac contractility.</text>
</comment>
<comment type="subcellular location">
    <subcellularLocation>
        <location>Secreted</location>
    </subcellularLocation>
</comment>
<comment type="tissue specificity">
    <text>Expressed by the venom gland.</text>
</comment>
<comment type="similarity">
    <text evidence="2">Belongs to the venom Kunitz-type family.</text>
</comment>
<feature type="chain" id="PRO_0000155447" description="Kunitz-type serine protease inhibitor homolog calcicludine">
    <location>
        <begin position="1"/>
        <end position="60"/>
    </location>
</feature>
<feature type="domain" description="BPTI/Kunitz inhibitor" evidence="1">
    <location>
        <begin position="7"/>
        <end position="57"/>
    </location>
</feature>
<feature type="disulfide bond">
    <location>
        <begin position="7"/>
        <end position="57"/>
    </location>
</feature>
<feature type="disulfide bond">
    <location>
        <begin position="16"/>
        <end position="40"/>
    </location>
</feature>
<feature type="disulfide bond">
    <location>
        <begin position="32"/>
        <end position="53"/>
    </location>
</feature>
<feature type="helix" evidence="3">
    <location>
        <begin position="5"/>
        <end position="8"/>
    </location>
</feature>
<feature type="strand" evidence="3">
    <location>
        <begin position="15"/>
        <end position="17"/>
    </location>
</feature>
<feature type="strand" evidence="3">
    <location>
        <begin position="20"/>
        <end position="26"/>
    </location>
</feature>
<feature type="turn" evidence="3">
    <location>
        <begin position="27"/>
        <end position="30"/>
    </location>
</feature>
<feature type="strand" evidence="3">
    <location>
        <begin position="31"/>
        <end position="37"/>
    </location>
</feature>
<feature type="strand" evidence="3">
    <location>
        <begin position="39"/>
        <end position="41"/>
    </location>
</feature>
<feature type="strand" evidence="3">
    <location>
        <begin position="47"/>
        <end position="49"/>
    </location>
</feature>
<feature type="helix" evidence="3">
    <location>
        <begin position="50"/>
        <end position="58"/>
    </location>
</feature>
<evidence type="ECO:0000255" key="1">
    <source>
        <dbReference type="PROSITE-ProRule" id="PRU00031"/>
    </source>
</evidence>
<evidence type="ECO:0000305" key="2"/>
<evidence type="ECO:0007829" key="3">
    <source>
        <dbReference type="PDB" id="5YV7"/>
    </source>
</evidence>
<name>VKTHC_DENAN</name>
<sequence>WQPPWYCKEPVRIGSCKKQFSSFYFKWTAKKCLPFLFSGCGGNANRFQTIGECRKKCLGK</sequence>
<keyword id="KW-0002">3D-structure</keyword>
<keyword id="KW-0108">Calcium channel impairing toxin</keyword>
<keyword id="KW-0123">Cardiotoxin</keyword>
<keyword id="KW-0903">Direct protein sequencing</keyword>
<keyword id="KW-1015">Disulfide bond</keyword>
<keyword id="KW-0872">Ion channel impairing toxin</keyword>
<keyword id="KW-0528">Neurotoxin</keyword>
<keyword id="KW-0964">Secreted</keyword>
<keyword id="KW-0800">Toxin</keyword>
<accession>P81658</accession>